<evidence type="ECO:0000255" key="1">
    <source>
        <dbReference type="HAMAP-Rule" id="MF_03111"/>
    </source>
</evidence>
<evidence type="ECO:0000256" key="2">
    <source>
        <dbReference type="SAM" id="MobiDB-lite"/>
    </source>
</evidence>
<proteinExistence type="inferred from homology"/>
<name>COQ4_PICGU</name>
<organism>
    <name type="scientific">Meyerozyma guilliermondii (strain ATCC 6260 / CBS 566 / DSM 6381 / JCM 1539 / NBRC 10279 / NRRL Y-324)</name>
    <name type="common">Yeast</name>
    <name type="synonym">Candida guilliermondii</name>
    <dbReference type="NCBI Taxonomy" id="294746"/>
    <lineage>
        <taxon>Eukaryota</taxon>
        <taxon>Fungi</taxon>
        <taxon>Dikarya</taxon>
        <taxon>Ascomycota</taxon>
        <taxon>Saccharomycotina</taxon>
        <taxon>Pichiomycetes</taxon>
        <taxon>Debaryomycetaceae</taxon>
        <taxon>Meyerozyma</taxon>
    </lineage>
</organism>
<reference key="1">
    <citation type="journal article" date="2009" name="Nature">
        <title>Evolution of pathogenicity and sexual reproduction in eight Candida genomes.</title>
        <authorList>
            <person name="Butler G."/>
            <person name="Rasmussen M.D."/>
            <person name="Lin M.F."/>
            <person name="Santos M.A.S."/>
            <person name="Sakthikumar S."/>
            <person name="Munro C.A."/>
            <person name="Rheinbay E."/>
            <person name="Grabherr M."/>
            <person name="Forche A."/>
            <person name="Reedy J.L."/>
            <person name="Agrafioti I."/>
            <person name="Arnaud M.B."/>
            <person name="Bates S."/>
            <person name="Brown A.J.P."/>
            <person name="Brunke S."/>
            <person name="Costanzo M.C."/>
            <person name="Fitzpatrick D.A."/>
            <person name="de Groot P.W.J."/>
            <person name="Harris D."/>
            <person name="Hoyer L.L."/>
            <person name="Hube B."/>
            <person name="Klis F.M."/>
            <person name="Kodira C."/>
            <person name="Lennard N."/>
            <person name="Logue M.E."/>
            <person name="Martin R."/>
            <person name="Neiman A.M."/>
            <person name="Nikolaou E."/>
            <person name="Quail M.A."/>
            <person name="Quinn J."/>
            <person name="Santos M.C."/>
            <person name="Schmitzberger F.F."/>
            <person name="Sherlock G."/>
            <person name="Shah P."/>
            <person name="Silverstein K.A.T."/>
            <person name="Skrzypek M.S."/>
            <person name="Soll D."/>
            <person name="Staggs R."/>
            <person name="Stansfield I."/>
            <person name="Stumpf M.P.H."/>
            <person name="Sudbery P.E."/>
            <person name="Srikantha T."/>
            <person name="Zeng Q."/>
            <person name="Berman J."/>
            <person name="Berriman M."/>
            <person name="Heitman J."/>
            <person name="Gow N.A.R."/>
            <person name="Lorenz M.C."/>
            <person name="Birren B.W."/>
            <person name="Kellis M."/>
            <person name="Cuomo C.A."/>
        </authorList>
    </citation>
    <scope>NUCLEOTIDE SEQUENCE [LARGE SCALE GENOMIC DNA]</scope>
    <source>
        <strain>ATCC 6260 / CBS 566 / DSM 6381 / JCM 1539 / NBRC 10279 / NRRL Y-324</strain>
    </source>
</reference>
<accession>A5DMG2</accession>
<gene>
    <name evidence="1" type="primary">COQ4</name>
    <name type="ORF">PGUG_04463</name>
</gene>
<feature type="chain" id="PRO_0000388129" description="Ubiquinone biosynthesis protein COQ4, mitochondrial">
    <location>
        <begin position="1"/>
        <end position="313"/>
    </location>
</feature>
<feature type="region of interest" description="Disordered" evidence="2">
    <location>
        <begin position="290"/>
        <end position="313"/>
    </location>
</feature>
<feature type="compositionally biased region" description="Basic and acidic residues" evidence="2">
    <location>
        <begin position="303"/>
        <end position="313"/>
    </location>
</feature>
<feature type="binding site" evidence="1">
    <location>
        <position position="197"/>
    </location>
    <ligand>
        <name>Zn(2+)</name>
        <dbReference type="ChEBI" id="CHEBI:29105"/>
    </ligand>
</feature>
<feature type="binding site" evidence="1">
    <location>
        <position position="198"/>
    </location>
    <ligand>
        <name>Zn(2+)</name>
        <dbReference type="ChEBI" id="CHEBI:29105"/>
    </ligand>
</feature>
<feature type="binding site" evidence="1">
    <location>
        <position position="201"/>
    </location>
    <ligand>
        <name>Zn(2+)</name>
        <dbReference type="ChEBI" id="CHEBI:29105"/>
    </ligand>
</feature>
<feature type="binding site" evidence="1">
    <location>
        <position position="213"/>
    </location>
    <ligand>
        <name>Zn(2+)</name>
        <dbReference type="ChEBI" id="CHEBI:29105"/>
    </ligand>
</feature>
<protein>
    <recommendedName>
        <fullName evidence="1">Ubiquinone biosynthesis protein COQ4, mitochondrial</fullName>
    </recommendedName>
    <alternativeName>
        <fullName>4-hydroxy-3-methoxy-5-polyprenylbenzoate decarboxylase</fullName>
        <ecNumber evidence="1">4.1.1.130</ecNumber>
    </alternativeName>
    <alternativeName>
        <fullName evidence="1">Coenzyme Q biosynthesis protein 4</fullName>
    </alternativeName>
</protein>
<dbReference type="EC" id="4.1.1.130" evidence="1"/>
<dbReference type="EMBL" id="CH408159">
    <property type="protein sequence ID" value="EDK40365.2"/>
    <property type="molecule type" value="Genomic_DNA"/>
</dbReference>
<dbReference type="RefSeq" id="XP_001483734.1">
    <property type="nucleotide sequence ID" value="XM_001483684.1"/>
</dbReference>
<dbReference type="SMR" id="A5DMG2"/>
<dbReference type="FunCoup" id="A5DMG2">
    <property type="interactions" value="539"/>
</dbReference>
<dbReference type="STRING" id="294746.A5DMG2"/>
<dbReference type="GeneID" id="5125101"/>
<dbReference type="KEGG" id="pgu:PGUG_04463"/>
<dbReference type="eggNOG" id="KOG3244">
    <property type="taxonomic scope" value="Eukaryota"/>
</dbReference>
<dbReference type="HOGENOM" id="CLU_061241_0_2_1"/>
<dbReference type="InParanoid" id="A5DMG2"/>
<dbReference type="OMA" id="YYERHFH"/>
<dbReference type="OrthoDB" id="4249at2759"/>
<dbReference type="UniPathway" id="UPA00232"/>
<dbReference type="Proteomes" id="UP000001997">
    <property type="component" value="Unassembled WGS sequence"/>
</dbReference>
<dbReference type="GO" id="GO:0031314">
    <property type="term" value="C:extrinsic component of mitochondrial inner membrane"/>
    <property type="evidence" value="ECO:0007669"/>
    <property type="project" value="UniProtKB-UniRule"/>
</dbReference>
<dbReference type="GO" id="GO:0006744">
    <property type="term" value="P:ubiquinone biosynthetic process"/>
    <property type="evidence" value="ECO:0007669"/>
    <property type="project" value="UniProtKB-UniRule"/>
</dbReference>
<dbReference type="HAMAP" id="MF_03111">
    <property type="entry name" value="Coq4"/>
    <property type="match status" value="1"/>
</dbReference>
<dbReference type="InterPro" id="IPR007715">
    <property type="entry name" value="Coq4"/>
</dbReference>
<dbReference type="InterPro" id="IPR027540">
    <property type="entry name" value="Coq4_euk"/>
</dbReference>
<dbReference type="PANTHER" id="PTHR12922">
    <property type="entry name" value="UBIQUINONE BIOSYNTHESIS PROTEIN"/>
    <property type="match status" value="1"/>
</dbReference>
<dbReference type="PANTHER" id="PTHR12922:SF7">
    <property type="entry name" value="UBIQUINONE BIOSYNTHESIS PROTEIN COQ4 HOMOLOG, MITOCHONDRIAL"/>
    <property type="match status" value="1"/>
</dbReference>
<dbReference type="Pfam" id="PF05019">
    <property type="entry name" value="Coq4"/>
    <property type="match status" value="1"/>
</dbReference>
<comment type="function">
    <text evidence="1">Lyase that catalyzes the C1-decarboxylation of 4-hydroxy-3-methoxy-5-(all-trans-polyprenyl)benzoic acid into 2-methoxy-6-(all-trans-polyprenyl)phenol during ubiquinone biosynthesis.</text>
</comment>
<comment type="catalytic activity">
    <reaction evidence="1">
        <text>a 4-hydroxy-3-methoxy-5-(all-trans-polyprenyl)benzoate + H(+) = a 2-methoxy-6-(all-trans-polyprenyl)phenol + CO2</text>
        <dbReference type="Rhea" id="RHEA:81179"/>
        <dbReference type="Rhea" id="RHEA-COMP:9551"/>
        <dbReference type="Rhea" id="RHEA-COMP:10931"/>
        <dbReference type="ChEBI" id="CHEBI:15378"/>
        <dbReference type="ChEBI" id="CHEBI:16526"/>
        <dbReference type="ChEBI" id="CHEBI:62731"/>
        <dbReference type="ChEBI" id="CHEBI:84443"/>
        <dbReference type="EC" id="4.1.1.130"/>
    </reaction>
</comment>
<comment type="cofactor">
    <cofactor evidence="1">
        <name>Zn(2+)</name>
        <dbReference type="ChEBI" id="CHEBI:29105"/>
    </cofactor>
</comment>
<comment type="pathway">
    <text evidence="1">Cofactor biosynthesis; ubiquinone biosynthesis.</text>
</comment>
<comment type="subunit">
    <text evidence="1">Component of a multi-subunit COQ enzyme complex, composed of at least COQ3, COQ4, COQ5, COQ6, COQ7 and COQ9.</text>
</comment>
<comment type="subcellular location">
    <subcellularLocation>
        <location evidence="1">Mitochondrion inner membrane</location>
        <topology evidence="1">Peripheral membrane protein</topology>
        <orientation evidence="1">Matrix side</orientation>
    </subcellularLocation>
</comment>
<comment type="miscellaneous">
    <text evidence="1">This protein may be expected to contain an N-terminal transit peptide but none has been predicted.</text>
</comment>
<comment type="similarity">
    <text evidence="1">Belongs to the COQ4 family.</text>
</comment>
<keyword id="KW-0456">Lyase</keyword>
<keyword id="KW-0472">Membrane</keyword>
<keyword id="KW-0479">Metal-binding</keyword>
<keyword id="KW-0496">Mitochondrion</keyword>
<keyword id="KW-0999">Mitochondrion inner membrane</keyword>
<keyword id="KW-1185">Reference proteome</keyword>
<keyword id="KW-0831">Ubiquinone biosynthesis</keyword>
<keyword id="KW-0862">Zinc</keyword>
<sequence length="313" mass="36152">MFSIVSSRPKSLVRPNSRSIVLPALVALTSIIFSKDNRLADKMESGKLHYKDVNSTFNVDKPYKSRSKPNYPGHVPLNAFEKLLMMAGSSIGSYLHPERNEFIVGLGESTAFTPVLRRLQRQMLSDPVGRQILRERPRITSESLDLDYLRSLPKNTIGSAYIQWLDREGVSPDTRVPVRYIDDEELAYIYQRYRECHDFYHAITGLPIIIEGEIAVKVLEFTNIGIPMSGLGGLFAPLRLRPKQRERLYGIYYPWAFKSGLNSKPLINVYWEKILEQDINEFRRDMGIEQPPDLRELRRKQKKLPEPERENAN</sequence>